<name>KDSA_SHIFL</name>
<keyword id="KW-0963">Cytoplasm</keyword>
<keyword id="KW-0448">Lipopolysaccharide biosynthesis</keyword>
<keyword id="KW-1185">Reference proteome</keyword>
<keyword id="KW-0808">Transferase</keyword>
<feature type="chain" id="PRO_0000187166" description="2-dehydro-3-deoxyphosphooctonate aldolase">
    <location>
        <begin position="1"/>
        <end position="284"/>
    </location>
</feature>
<evidence type="ECO:0000250" key="1"/>
<evidence type="ECO:0000305" key="2"/>
<protein>
    <recommendedName>
        <fullName>2-dehydro-3-deoxyphosphooctonate aldolase</fullName>
        <ecNumber>2.5.1.55</ecNumber>
    </recommendedName>
    <alternativeName>
        <fullName>3-deoxy-D-manno-octulosonic acid 8-phosphate synthase</fullName>
    </alternativeName>
    <alternativeName>
        <fullName>KDO-8-phosphate synthase</fullName>
        <shortName>KDO 8-P synthase</shortName>
        <shortName>KDOPS</shortName>
    </alternativeName>
    <alternativeName>
        <fullName>Phospho-2-dehydro-3-deoxyoctonate aldolase</fullName>
    </alternativeName>
</protein>
<sequence length="284" mass="30833">MKQKVVSIGDINVANDLPFVLFGGMNVLESRDLAMRICEHYVTVTQKLGIPYVFKASFDKANRSSIHSYRGPGLEEGMKIFQELKQTFGVKIITDVHEPSQAQPVADVVDVIQLPAFLARQTDLVEAMAKTGAVINVKKPQFVSPGQMGNIVDKFKEGGNEKVILCDRGANFGYDNLVVDMLGFSIMKKVSGNSPVIFDVTHALQCRDPFGAASGGRRAQVAELARAGMAVGLAGLFIEAHPDPEHAKCDGPSALPLAKLEPFLKQMKAIDDLVKGFEELDTSK</sequence>
<gene>
    <name type="primary">kdsA</name>
    <name type="ordered locus">SF1218</name>
    <name type="ordered locus">S1302</name>
</gene>
<organism>
    <name type="scientific">Shigella flexneri</name>
    <dbReference type="NCBI Taxonomy" id="623"/>
    <lineage>
        <taxon>Bacteria</taxon>
        <taxon>Pseudomonadati</taxon>
        <taxon>Pseudomonadota</taxon>
        <taxon>Gammaproteobacteria</taxon>
        <taxon>Enterobacterales</taxon>
        <taxon>Enterobacteriaceae</taxon>
        <taxon>Shigella</taxon>
    </lineage>
</organism>
<dbReference type="EC" id="2.5.1.55"/>
<dbReference type="EMBL" id="AE005674">
    <property type="protein sequence ID" value="AAN42831.1"/>
    <property type="molecule type" value="Genomic_DNA"/>
</dbReference>
<dbReference type="EMBL" id="AE014073">
    <property type="protein sequence ID" value="AAP16717.1"/>
    <property type="molecule type" value="Genomic_DNA"/>
</dbReference>
<dbReference type="RefSeq" id="NP_707124.1">
    <property type="nucleotide sequence ID" value="NC_004337.2"/>
</dbReference>
<dbReference type="RefSeq" id="WP_000811065.1">
    <property type="nucleotide sequence ID" value="NZ_WPGW01000029.1"/>
</dbReference>
<dbReference type="SMR" id="P0A716"/>
<dbReference type="STRING" id="198214.SF1218"/>
<dbReference type="DrugBank" id="DB03936">
    <property type="generic name" value="1-Deoxy-Ribofuranose-5'-Phosphate"/>
</dbReference>
<dbReference type="DrugBank" id="DB03113">
    <property type="generic name" value="3-Fluoro-2-(Phosphonooxy)Propanoic Acid"/>
</dbReference>
<dbReference type="DrugBank" id="DB01819">
    <property type="generic name" value="Phosphoenolpyruvate"/>
</dbReference>
<dbReference type="DrugBank" id="DB02433">
    <property type="generic name" value="{[(2,2-Dihydroxy-Ethyl)-(2,3,4,5-Tetrahydroxy-6-Phosphonooxy-Hexyl)-Amino]-Methyl}-Phosphonic Acid"/>
</dbReference>
<dbReference type="PaxDb" id="198214-SF1218"/>
<dbReference type="GeneID" id="1024177"/>
<dbReference type="GeneID" id="75203328"/>
<dbReference type="KEGG" id="sfl:SF1218"/>
<dbReference type="KEGG" id="sfx:S1302"/>
<dbReference type="PATRIC" id="fig|198214.7.peg.1435"/>
<dbReference type="HOGENOM" id="CLU_036666_0_0_6"/>
<dbReference type="UniPathway" id="UPA00030"/>
<dbReference type="UniPathway" id="UPA00357">
    <property type="reaction ID" value="UER00474"/>
</dbReference>
<dbReference type="Proteomes" id="UP000001006">
    <property type="component" value="Chromosome"/>
</dbReference>
<dbReference type="Proteomes" id="UP000002673">
    <property type="component" value="Chromosome"/>
</dbReference>
<dbReference type="GO" id="GO:0005737">
    <property type="term" value="C:cytoplasm"/>
    <property type="evidence" value="ECO:0007669"/>
    <property type="project" value="UniProtKB-SubCell"/>
</dbReference>
<dbReference type="GO" id="GO:0008676">
    <property type="term" value="F:3-deoxy-8-phosphooctulonate synthase activity"/>
    <property type="evidence" value="ECO:0007669"/>
    <property type="project" value="UniProtKB-UniRule"/>
</dbReference>
<dbReference type="GO" id="GO:0019294">
    <property type="term" value="P:keto-3-deoxy-D-manno-octulosonic acid biosynthetic process"/>
    <property type="evidence" value="ECO:0007669"/>
    <property type="project" value="UniProtKB-UniRule"/>
</dbReference>
<dbReference type="FunFam" id="3.20.20.70:FF:000058">
    <property type="entry name" value="2-dehydro-3-deoxyphosphooctonate aldolase"/>
    <property type="match status" value="1"/>
</dbReference>
<dbReference type="Gene3D" id="3.20.20.70">
    <property type="entry name" value="Aldolase class I"/>
    <property type="match status" value="1"/>
</dbReference>
<dbReference type="HAMAP" id="MF_00056">
    <property type="entry name" value="KDO8P_synth"/>
    <property type="match status" value="1"/>
</dbReference>
<dbReference type="InterPro" id="IPR013785">
    <property type="entry name" value="Aldolase_TIM"/>
</dbReference>
<dbReference type="InterPro" id="IPR006218">
    <property type="entry name" value="DAHP1/KDSA"/>
</dbReference>
<dbReference type="InterPro" id="IPR006269">
    <property type="entry name" value="KDO8P_synthase"/>
</dbReference>
<dbReference type="NCBIfam" id="TIGR01362">
    <property type="entry name" value="KDO8P_synth"/>
    <property type="match status" value="1"/>
</dbReference>
<dbReference type="NCBIfam" id="NF003543">
    <property type="entry name" value="PRK05198.1"/>
    <property type="match status" value="1"/>
</dbReference>
<dbReference type="NCBIfam" id="NF009109">
    <property type="entry name" value="PRK12457.1"/>
    <property type="match status" value="1"/>
</dbReference>
<dbReference type="PANTHER" id="PTHR21057">
    <property type="entry name" value="PHOSPHO-2-DEHYDRO-3-DEOXYHEPTONATE ALDOLASE"/>
    <property type="match status" value="1"/>
</dbReference>
<dbReference type="Pfam" id="PF00793">
    <property type="entry name" value="DAHP_synth_1"/>
    <property type="match status" value="1"/>
</dbReference>
<dbReference type="SUPFAM" id="SSF51569">
    <property type="entry name" value="Aldolase"/>
    <property type="match status" value="1"/>
</dbReference>
<accession>P0A716</accession>
<accession>P17579</accession>
<reference key="1">
    <citation type="journal article" date="2002" name="Nucleic Acids Res.">
        <title>Genome sequence of Shigella flexneri 2a: insights into pathogenicity through comparison with genomes of Escherichia coli K12 and O157.</title>
        <authorList>
            <person name="Jin Q."/>
            <person name="Yuan Z."/>
            <person name="Xu J."/>
            <person name="Wang Y."/>
            <person name="Shen Y."/>
            <person name="Lu W."/>
            <person name="Wang J."/>
            <person name="Liu H."/>
            <person name="Yang J."/>
            <person name="Yang F."/>
            <person name="Zhang X."/>
            <person name="Zhang J."/>
            <person name="Yang G."/>
            <person name="Wu H."/>
            <person name="Qu D."/>
            <person name="Dong J."/>
            <person name="Sun L."/>
            <person name="Xue Y."/>
            <person name="Zhao A."/>
            <person name="Gao Y."/>
            <person name="Zhu J."/>
            <person name="Kan B."/>
            <person name="Ding K."/>
            <person name="Chen S."/>
            <person name="Cheng H."/>
            <person name="Yao Z."/>
            <person name="He B."/>
            <person name="Chen R."/>
            <person name="Ma D."/>
            <person name="Qiang B."/>
            <person name="Wen Y."/>
            <person name="Hou Y."/>
            <person name="Yu J."/>
        </authorList>
    </citation>
    <scope>NUCLEOTIDE SEQUENCE [LARGE SCALE GENOMIC DNA]</scope>
    <source>
        <strain>301 / Serotype 2a</strain>
    </source>
</reference>
<reference key="2">
    <citation type="journal article" date="2003" name="Infect. Immun.">
        <title>Complete genome sequence and comparative genomics of Shigella flexneri serotype 2a strain 2457T.</title>
        <authorList>
            <person name="Wei J."/>
            <person name="Goldberg M.B."/>
            <person name="Burland V."/>
            <person name="Venkatesan M.M."/>
            <person name="Deng W."/>
            <person name="Fournier G."/>
            <person name="Mayhew G.F."/>
            <person name="Plunkett G. III"/>
            <person name="Rose D.J."/>
            <person name="Darling A."/>
            <person name="Mau B."/>
            <person name="Perna N.T."/>
            <person name="Payne S.M."/>
            <person name="Runyen-Janecky L.J."/>
            <person name="Zhou S."/>
            <person name="Schwartz D.C."/>
            <person name="Blattner F.R."/>
        </authorList>
    </citation>
    <scope>NUCLEOTIDE SEQUENCE [LARGE SCALE GENOMIC DNA]</scope>
    <source>
        <strain>ATCC 700930 / 2457T / Serotype 2a</strain>
    </source>
</reference>
<comment type="catalytic activity">
    <reaction>
        <text>D-arabinose 5-phosphate + phosphoenolpyruvate + H2O = 3-deoxy-alpha-D-manno-2-octulosonate-8-phosphate + phosphate</text>
        <dbReference type="Rhea" id="RHEA:14053"/>
        <dbReference type="ChEBI" id="CHEBI:15377"/>
        <dbReference type="ChEBI" id="CHEBI:43474"/>
        <dbReference type="ChEBI" id="CHEBI:57693"/>
        <dbReference type="ChEBI" id="CHEBI:58702"/>
        <dbReference type="ChEBI" id="CHEBI:85985"/>
        <dbReference type="EC" id="2.5.1.55"/>
    </reaction>
</comment>
<comment type="pathway">
    <text>Carbohydrate biosynthesis; 3-deoxy-D-manno-octulosonate biosynthesis; 3-deoxy-D-manno-octulosonate from D-ribulose 5-phosphate: step 2/3.</text>
</comment>
<comment type="pathway">
    <text>Bacterial outer membrane biogenesis; lipopolysaccharide biosynthesis.</text>
</comment>
<comment type="subcellular location">
    <subcellularLocation>
        <location evidence="1">Cytoplasm</location>
    </subcellularLocation>
</comment>
<comment type="similarity">
    <text evidence="2">Belongs to the KdsA family.</text>
</comment>
<proteinExistence type="inferred from homology"/>